<comment type="function">
    <text evidence="2 3 8 9">May regulate secretion and presynaptic differentiation through inhibition of the activity of N-type voltage-gated calcium channel (PubMed:17502602). May activate the MAP kinase JNK (By similarity). Plays a role in neurite outgrowth (PubMed:18801879). During dendritic spine formation can bidirectionally induce pre- and post-synaptic differentiation of neurons by trans-synaptically binding to PTPRD (By similarity).</text>
</comment>
<comment type="catalytic activity">
    <reaction evidence="6">
        <text>NAD(+) + H2O = ADP-D-ribose + nicotinamide + H(+)</text>
        <dbReference type="Rhea" id="RHEA:16301"/>
        <dbReference type="ChEBI" id="CHEBI:15377"/>
        <dbReference type="ChEBI" id="CHEBI:15378"/>
        <dbReference type="ChEBI" id="CHEBI:17154"/>
        <dbReference type="ChEBI" id="CHEBI:57540"/>
        <dbReference type="ChEBI" id="CHEBI:57967"/>
        <dbReference type="EC" id="3.2.2.6"/>
    </reaction>
    <physiologicalReaction direction="left-to-right" evidence="6">
        <dbReference type="Rhea" id="RHEA:16302"/>
    </physiologicalReaction>
</comment>
<comment type="subunit">
    <text evidence="2 3">Homodimer (By similarity). Interacts (calcium-independent) with NCS1/FREQ (By similarity). Interacts (via the first immunoglobilin domain) with PTPRD (via the second immunoglobilin domain); this interaction is PTPRD-splicing-dependent and induces pre- and post-synaptic differentiation of neurons and is required for IL1RAPL1-mediated synapse formation (By similarity).</text>
</comment>
<comment type="subcellular location">
    <subcellularLocation>
        <location evidence="9">Cell membrane</location>
        <topology evidence="9">Single-pass type I membrane protein</topology>
    </subcellularLocation>
    <subcellularLocation>
        <location evidence="9">Cytoplasm</location>
    </subcellularLocation>
    <subcellularLocation>
        <location evidence="1">Cell projection</location>
        <location evidence="1">Axon</location>
    </subcellularLocation>
    <subcellularLocation>
        <location evidence="1">Cell projection</location>
        <location evidence="1">Dendrite</location>
    </subcellularLocation>
    <text>May localize to the cell body and growth cones of dendrite-like processes.</text>
</comment>
<comment type="domain">
    <text evidence="6">The TIR domain mediates NAD(+) hydrolase (NADase) activity. Self-association of TIR domains is required for NADase activity.</text>
</comment>
<comment type="similarity">
    <text evidence="10">Belongs to the interleukin-1 receptor family.</text>
</comment>
<reference key="1">
    <citation type="submission" date="2003-01" db="EMBL/GenBank/DDBJ databases">
        <title>Full length cloning of rat IL1RAPL in the hippocampus.</title>
        <authorList>
            <person name="Boda B."/>
            <person name="Parisi L."/>
            <person name="Muller D."/>
        </authorList>
    </citation>
    <scope>NUCLEOTIDE SEQUENCE [MRNA]</scope>
    <source>
        <strain>Wistar</strain>
        <tissue>Hippocampus</tissue>
    </source>
</reference>
<reference key="2">
    <citation type="journal article" date="2007" name="Proc. Natl. Acad. Sci. U.S.A.">
        <title>IL1-receptor accessory protein-like 1 (IL1RAPL1), a protein involved in cognitive functions, regulates N-type Ca2+-channel and neurite elongation.</title>
        <authorList>
            <person name="Gambino F."/>
            <person name="Pavlowsky A."/>
            <person name="Begle A."/>
            <person name="Dupont J.-L."/>
            <person name="Bahi N."/>
            <person name="Courjaret R."/>
            <person name="Gardette R."/>
            <person name="Hadjkacem H."/>
            <person name="Skala H."/>
            <person name="Poulain B."/>
            <person name="Chelly J."/>
            <person name="Vitale N."/>
            <person name="Humeau Y."/>
        </authorList>
    </citation>
    <scope>FUNCTION</scope>
</reference>
<reference key="3">
    <citation type="journal article" date="2008" name="Hum. Mol. Genet.">
        <title>Mutations in the calcium-related gene IL1RAPL1 are associated with autism.</title>
        <authorList>
            <person name="Piton A."/>
            <person name="Michaud J.L."/>
            <person name="Peng H."/>
            <person name="Aradhya S."/>
            <person name="Gauthier J."/>
            <person name="Mottron L."/>
            <person name="Champagne N."/>
            <person name="Lafreniere R.G."/>
            <person name="Hamdan F.F."/>
            <person name="Joober R."/>
            <person name="Fombonne E."/>
            <person name="Marineau C."/>
            <person name="Cossette P."/>
            <person name="Dube M.P."/>
            <person name="Haghighi P."/>
            <person name="Drapeau P."/>
            <person name="Barker P.A."/>
            <person name="Carbonetto S."/>
            <person name="Rouleau G.A."/>
        </authorList>
    </citation>
    <scope>FUNCTION</scope>
    <scope>SUBCELLULAR LOCATION</scope>
</reference>
<protein>
    <recommendedName>
        <fullName>Interleukin-1 receptor accessory protein-like 1</fullName>
        <shortName>IL-1-RAPL-1</shortName>
        <shortName>IL-1RAPL-1</shortName>
        <shortName>IL1RAPL-1</shortName>
        <ecNumber evidence="6">3.2.2.6</ecNumber>
    </recommendedName>
    <alternativeName>
        <fullName>X-linked interleukin-1 receptor accessory protein-like 1</fullName>
    </alternativeName>
</protein>
<sequence length="696" mass="79771">MKAPIPHLILLYATFTQSLKVVTKRGSADGCTDWSVDIKKYQVLVGEPVRIKCALFYGYIRTNYTLAQSAGLSLMWYKSSGPGDFEEPIAFDGSRMSKEEDSIWFRPTLLQDSGLYACVIRNSTYCMKVSISLTVGENDTGLCYNSKMKYFEKAELSKSKEISCRDIEDFLLPTREPEILWYKECRTKTWRPSIVFKRDTLLIKEVKEDDIGNYTCELKYGGFVVRRTTELTVTAPLTDKPPKLLYPMESKLTIQETQLGGSANLTCRAFFGYSGDVSPLIYWMKGEKFIEDLDENRVWESDIRILKEHLGEQEVSISLIVDSVEEGDLGNYSCYVENGNGRRHASVLLHKRELMYTVELAGGLGAILLLLVCSVTIYKCYKIEIMLFYRNHFGAEELDGDNKDYDAYLSYTKVDPDQWNQETGEEERFALEILPDMLEKHYGYKLFIPDRDLIPTGTYIEDVARCVDQSKRLIIVMTPNYVVRRGWSIFELETRLRNMLVTGEIKVILIECSELRGIMNYQEVEALKHTIKLLTVIKWHGPKCNKLNSKFWKRLQYEMPFKRIEPITHEQALDVSEQGPFGELQTVSAISMAAATSTALATAHPDLRSTFHNTYHSQMRQKHYYRSYEYDVPPTGTLPLTSIGNQHTYCNIPMTLINGQRPQTKSSREPNPDEAHTNSAILPLLARETSISSVIW</sequence>
<name>IRPL1_RAT</name>
<organism>
    <name type="scientific">Rattus norvegicus</name>
    <name type="common">Rat</name>
    <dbReference type="NCBI Taxonomy" id="10116"/>
    <lineage>
        <taxon>Eukaryota</taxon>
        <taxon>Metazoa</taxon>
        <taxon>Chordata</taxon>
        <taxon>Craniata</taxon>
        <taxon>Vertebrata</taxon>
        <taxon>Euteleostomi</taxon>
        <taxon>Mammalia</taxon>
        <taxon>Eutheria</taxon>
        <taxon>Euarchontoglires</taxon>
        <taxon>Glires</taxon>
        <taxon>Rodentia</taxon>
        <taxon>Myomorpha</taxon>
        <taxon>Muroidea</taxon>
        <taxon>Muridae</taxon>
        <taxon>Murinae</taxon>
        <taxon>Rattus</taxon>
    </lineage>
</organism>
<keyword id="KW-1003">Cell membrane</keyword>
<keyword id="KW-0966">Cell projection</keyword>
<keyword id="KW-0963">Cytoplasm</keyword>
<keyword id="KW-1015">Disulfide bond</keyword>
<keyword id="KW-0325">Glycoprotein</keyword>
<keyword id="KW-0378">Hydrolase</keyword>
<keyword id="KW-0393">Immunoglobulin domain</keyword>
<keyword id="KW-0472">Membrane</keyword>
<keyword id="KW-0520">NAD</keyword>
<keyword id="KW-0675">Receptor</keyword>
<keyword id="KW-1185">Reference proteome</keyword>
<keyword id="KW-0677">Repeat</keyword>
<keyword id="KW-0732">Signal</keyword>
<keyword id="KW-0812">Transmembrane</keyword>
<keyword id="KW-1133">Transmembrane helix</keyword>
<accession>P59824</accession>
<proteinExistence type="evidence at transcript level"/>
<feature type="signal peptide" evidence="4">
    <location>
        <begin position="1"/>
        <end position="24"/>
    </location>
</feature>
<feature type="chain" id="PRO_0000015458" description="Interleukin-1 receptor accessory protein-like 1">
    <location>
        <begin position="25"/>
        <end position="696"/>
    </location>
</feature>
<feature type="topological domain" description="Extracellular" evidence="4">
    <location>
        <begin position="25"/>
        <end position="357"/>
    </location>
</feature>
<feature type="transmembrane region" description="Helical" evidence="4">
    <location>
        <begin position="358"/>
        <end position="378"/>
    </location>
</feature>
<feature type="topological domain" description="Cytoplasmic" evidence="4">
    <location>
        <begin position="379"/>
        <end position="696"/>
    </location>
</feature>
<feature type="domain" description="Ig-like C2-type 1">
    <location>
        <begin position="25"/>
        <end position="134"/>
    </location>
</feature>
<feature type="domain" description="Ig-like C2-type 2">
    <location>
        <begin position="143"/>
        <end position="232"/>
    </location>
</feature>
<feature type="domain" description="Ig-like C2-type 3">
    <location>
        <begin position="242"/>
        <end position="350"/>
    </location>
</feature>
<feature type="domain" description="TIR" evidence="6">
    <location>
        <begin position="403"/>
        <end position="559"/>
    </location>
</feature>
<feature type="region of interest" description="Interaction with NCS1" evidence="1">
    <location>
        <begin position="549"/>
        <end position="644"/>
    </location>
</feature>
<feature type="region of interest" description="Disordered" evidence="7">
    <location>
        <begin position="659"/>
        <end position="680"/>
    </location>
</feature>
<feature type="compositionally biased region" description="Basic and acidic residues" evidence="7">
    <location>
        <begin position="666"/>
        <end position="676"/>
    </location>
</feature>
<feature type="active site" evidence="6">
    <location>
        <position position="491"/>
    </location>
</feature>
<feature type="site" description="Essential for interaction with PTPRD" evidence="2">
    <location>
        <position position="34"/>
    </location>
</feature>
<feature type="glycosylation site" description="N-linked (GlcNAc...) asparagine" evidence="4">
    <location>
        <position position="63"/>
    </location>
</feature>
<feature type="glycosylation site" description="N-linked (GlcNAc...) asparagine" evidence="4">
    <location>
        <position position="122"/>
    </location>
</feature>
<feature type="glycosylation site" description="N-linked (GlcNAc...) asparagine" evidence="4">
    <location>
        <position position="138"/>
    </location>
</feature>
<feature type="glycosylation site" description="N-linked (GlcNAc...) asparagine" evidence="4">
    <location>
        <position position="213"/>
    </location>
</feature>
<feature type="glycosylation site" description="N-linked (GlcNAc...) asparagine" evidence="4">
    <location>
        <position position="264"/>
    </location>
</feature>
<feature type="glycosylation site" description="N-linked (GlcNAc...) asparagine" evidence="4">
    <location>
        <position position="331"/>
    </location>
</feature>
<feature type="disulfide bond" evidence="2">
    <location>
        <begin position="31"/>
        <end position="126"/>
    </location>
</feature>
<feature type="disulfide bond" evidence="5">
    <location>
        <begin position="53"/>
        <end position="118"/>
    </location>
</feature>
<feature type="disulfide bond" evidence="2">
    <location>
        <begin position="143"/>
        <end position="185"/>
    </location>
</feature>
<feature type="disulfide bond" evidence="5">
    <location>
        <begin position="164"/>
        <end position="216"/>
    </location>
</feature>
<feature type="disulfide bond" evidence="5">
    <location>
        <begin position="267"/>
        <end position="334"/>
    </location>
</feature>
<dbReference type="EC" id="3.2.2.6" evidence="6"/>
<dbReference type="EMBL" id="AY216593">
    <property type="protein sequence ID" value="AAO62634.1"/>
    <property type="molecule type" value="mRNA"/>
</dbReference>
<dbReference type="RefSeq" id="NP_808796.1">
    <property type="nucleotide sequence ID" value="NM_177935.2"/>
</dbReference>
<dbReference type="SMR" id="P59824"/>
<dbReference type="FunCoup" id="P59824">
    <property type="interactions" value="59"/>
</dbReference>
<dbReference type="STRING" id="10116.ENSRNOP00000068289"/>
<dbReference type="CarbonylDB" id="P59824"/>
<dbReference type="GlyCosmos" id="P59824">
    <property type="glycosylation" value="6 sites, No reported glycans"/>
</dbReference>
<dbReference type="GlyGen" id="P59824">
    <property type="glycosylation" value="6 sites"/>
</dbReference>
<dbReference type="iPTMnet" id="P59824"/>
<dbReference type="PhosphoSitePlus" id="P59824"/>
<dbReference type="SwissPalm" id="P59824"/>
<dbReference type="PaxDb" id="10116-ENSRNOP00000068289"/>
<dbReference type="GeneID" id="317553"/>
<dbReference type="KEGG" id="rno:317553"/>
<dbReference type="AGR" id="RGD:727891"/>
<dbReference type="CTD" id="11141"/>
<dbReference type="RGD" id="727891">
    <property type="gene designation" value="Il1rapl1"/>
</dbReference>
<dbReference type="eggNOG" id="KOG3971">
    <property type="taxonomic scope" value="Eukaryota"/>
</dbReference>
<dbReference type="InParanoid" id="P59824"/>
<dbReference type="OrthoDB" id="9925886at2759"/>
<dbReference type="PhylomeDB" id="P59824"/>
<dbReference type="Reactome" id="R-RNO-388844">
    <property type="pathway name" value="Receptor-type tyrosine-protein phosphatases"/>
</dbReference>
<dbReference type="Reactome" id="R-RNO-9007892">
    <property type="pathway name" value="Interleukin-38 signaling"/>
</dbReference>
<dbReference type="PRO" id="PR:P59824"/>
<dbReference type="Proteomes" id="UP000002494">
    <property type="component" value="Unplaced"/>
</dbReference>
<dbReference type="GO" id="GO:0030424">
    <property type="term" value="C:axon"/>
    <property type="evidence" value="ECO:0007669"/>
    <property type="project" value="UniProtKB-SubCell"/>
</dbReference>
<dbReference type="GO" id="GO:0009986">
    <property type="term" value="C:cell surface"/>
    <property type="evidence" value="ECO:0000266"/>
    <property type="project" value="RGD"/>
</dbReference>
<dbReference type="GO" id="GO:0005737">
    <property type="term" value="C:cytoplasm"/>
    <property type="evidence" value="ECO:0007669"/>
    <property type="project" value="UniProtKB-SubCell"/>
</dbReference>
<dbReference type="GO" id="GO:0030425">
    <property type="term" value="C:dendrite"/>
    <property type="evidence" value="ECO:0000266"/>
    <property type="project" value="RGD"/>
</dbReference>
<dbReference type="GO" id="GO:0098978">
    <property type="term" value="C:glutamatergic synapse"/>
    <property type="evidence" value="ECO:0000314"/>
    <property type="project" value="SynGO"/>
</dbReference>
<dbReference type="GO" id="GO:0005886">
    <property type="term" value="C:plasma membrane"/>
    <property type="evidence" value="ECO:0000250"/>
    <property type="project" value="UniProtKB"/>
</dbReference>
<dbReference type="GO" id="GO:0098839">
    <property type="term" value="C:postsynaptic density membrane"/>
    <property type="evidence" value="ECO:0000314"/>
    <property type="project" value="SynGO"/>
</dbReference>
<dbReference type="GO" id="GO:0061809">
    <property type="term" value="F:NAD+ nucleosidase activity, cyclic ADP-ribose generating"/>
    <property type="evidence" value="ECO:0007669"/>
    <property type="project" value="UniProtKB-EC"/>
</dbReference>
<dbReference type="GO" id="GO:0005102">
    <property type="term" value="F:signaling receptor binding"/>
    <property type="evidence" value="ECO:0000266"/>
    <property type="project" value="RGD"/>
</dbReference>
<dbReference type="GO" id="GO:0007166">
    <property type="term" value="P:cell surface receptor signaling pathway"/>
    <property type="evidence" value="ECO:0000318"/>
    <property type="project" value="GO_Central"/>
</dbReference>
<dbReference type="GO" id="GO:0007157">
    <property type="term" value="P:heterophilic cell-cell adhesion via plasma membrane cell adhesion molecules"/>
    <property type="evidence" value="ECO:0000266"/>
    <property type="project" value="RGD"/>
</dbReference>
<dbReference type="GO" id="GO:0045920">
    <property type="term" value="P:negative regulation of exocytosis"/>
    <property type="evidence" value="ECO:0000314"/>
    <property type="project" value="UniProtKB"/>
</dbReference>
<dbReference type="GO" id="GO:0030182">
    <property type="term" value="P:neuron differentiation"/>
    <property type="evidence" value="ECO:0000266"/>
    <property type="project" value="RGD"/>
</dbReference>
<dbReference type="GO" id="GO:0050775">
    <property type="term" value="P:positive regulation of dendrite morphogenesis"/>
    <property type="evidence" value="ECO:0000266"/>
    <property type="project" value="RGD"/>
</dbReference>
<dbReference type="GO" id="GO:0061003">
    <property type="term" value="P:positive regulation of dendritic spine morphogenesis"/>
    <property type="evidence" value="ECO:0000266"/>
    <property type="project" value="RGD"/>
</dbReference>
<dbReference type="GO" id="GO:0051965">
    <property type="term" value="P:positive regulation of synapse assembly"/>
    <property type="evidence" value="ECO:0000250"/>
    <property type="project" value="UniProtKB"/>
</dbReference>
<dbReference type="GO" id="GO:0097105">
    <property type="term" value="P:presynaptic membrane assembly"/>
    <property type="evidence" value="ECO:0000266"/>
    <property type="project" value="RGD"/>
</dbReference>
<dbReference type="GO" id="GO:0010975">
    <property type="term" value="P:regulation of neuron projection development"/>
    <property type="evidence" value="ECO:0000314"/>
    <property type="project" value="UniProtKB"/>
</dbReference>
<dbReference type="GO" id="GO:0099175">
    <property type="term" value="P:regulation of postsynapse organization"/>
    <property type="evidence" value="ECO:0000266"/>
    <property type="project" value="RGD"/>
</dbReference>
<dbReference type="GO" id="GO:1905606">
    <property type="term" value="P:regulation of presynapse assembly"/>
    <property type="evidence" value="ECO:0000266"/>
    <property type="project" value="RGD"/>
</dbReference>
<dbReference type="GO" id="GO:0099560">
    <property type="term" value="P:synaptic membrane adhesion"/>
    <property type="evidence" value="ECO:0000266"/>
    <property type="project" value="RGD"/>
</dbReference>
<dbReference type="GO" id="GO:0099545">
    <property type="term" value="P:trans-synaptic signaling by trans-synaptic complex"/>
    <property type="evidence" value="ECO:0000266"/>
    <property type="project" value="RGD"/>
</dbReference>
<dbReference type="CDD" id="cd00096">
    <property type="entry name" value="Ig"/>
    <property type="match status" value="1"/>
</dbReference>
<dbReference type="CDD" id="cd05896">
    <property type="entry name" value="Ig1_IL1RAPL-1_like"/>
    <property type="match status" value="1"/>
</dbReference>
<dbReference type="FunFam" id="2.60.40.10:FF:000188">
    <property type="entry name" value="Interleukin-1 receptor accessory protein-like 1"/>
    <property type="match status" value="1"/>
</dbReference>
<dbReference type="FunFam" id="2.60.40.10:FF:001486">
    <property type="entry name" value="Interleukin-1 receptor accessory protein-like 1"/>
    <property type="match status" value="1"/>
</dbReference>
<dbReference type="FunFam" id="2.60.40.10:FF:000220">
    <property type="entry name" value="X-linked interleukin-1 receptor accessory protein-like 1"/>
    <property type="match status" value="1"/>
</dbReference>
<dbReference type="FunFam" id="3.40.50.10140:FF:000004">
    <property type="entry name" value="X-linked interleukin-1 receptor accessory protein-like 1"/>
    <property type="match status" value="1"/>
</dbReference>
<dbReference type="Gene3D" id="2.60.40.10">
    <property type="entry name" value="Immunoglobulins"/>
    <property type="match status" value="3"/>
</dbReference>
<dbReference type="Gene3D" id="3.40.50.10140">
    <property type="entry name" value="Toll/interleukin-1 receptor homology (TIR) domain"/>
    <property type="match status" value="1"/>
</dbReference>
<dbReference type="InterPro" id="IPR007110">
    <property type="entry name" value="Ig-like_dom"/>
</dbReference>
<dbReference type="InterPro" id="IPR036179">
    <property type="entry name" value="Ig-like_dom_sf"/>
</dbReference>
<dbReference type="InterPro" id="IPR013783">
    <property type="entry name" value="Ig-like_fold"/>
</dbReference>
<dbReference type="InterPro" id="IPR003599">
    <property type="entry name" value="Ig_sub"/>
</dbReference>
<dbReference type="InterPro" id="IPR003598">
    <property type="entry name" value="Ig_sub2"/>
</dbReference>
<dbReference type="InterPro" id="IPR015621">
    <property type="entry name" value="IL-1_rcpt_fam"/>
</dbReference>
<dbReference type="InterPro" id="IPR041416">
    <property type="entry name" value="IL-1RAcP-like_ig"/>
</dbReference>
<dbReference type="InterPro" id="IPR013151">
    <property type="entry name" value="Immunoglobulin_dom"/>
</dbReference>
<dbReference type="InterPro" id="IPR000157">
    <property type="entry name" value="TIR_dom"/>
</dbReference>
<dbReference type="InterPro" id="IPR035897">
    <property type="entry name" value="Toll_tir_struct_dom_sf"/>
</dbReference>
<dbReference type="PANTHER" id="PTHR11890:SF22">
    <property type="entry name" value="INTERLEUKIN-1 RECEPTOR ACCESSORY PROTEIN-LIKE 1"/>
    <property type="match status" value="1"/>
</dbReference>
<dbReference type="PANTHER" id="PTHR11890">
    <property type="entry name" value="INTERLEUKIN-1 RECEPTOR FAMILY MEMBER"/>
    <property type="match status" value="1"/>
</dbReference>
<dbReference type="Pfam" id="PF00047">
    <property type="entry name" value="ig"/>
    <property type="match status" value="1"/>
</dbReference>
<dbReference type="Pfam" id="PF18452">
    <property type="entry name" value="Ig_6"/>
    <property type="match status" value="1"/>
</dbReference>
<dbReference type="Pfam" id="PF01582">
    <property type="entry name" value="TIR"/>
    <property type="match status" value="1"/>
</dbReference>
<dbReference type="PRINTS" id="PR01537">
    <property type="entry name" value="INTRLKN1R1F"/>
</dbReference>
<dbReference type="SMART" id="SM00409">
    <property type="entry name" value="IG"/>
    <property type="match status" value="3"/>
</dbReference>
<dbReference type="SMART" id="SM00408">
    <property type="entry name" value="IGc2"/>
    <property type="match status" value="2"/>
</dbReference>
<dbReference type="SMART" id="SM00255">
    <property type="entry name" value="TIR"/>
    <property type="match status" value="1"/>
</dbReference>
<dbReference type="SUPFAM" id="SSF48726">
    <property type="entry name" value="Immunoglobulin"/>
    <property type="match status" value="3"/>
</dbReference>
<dbReference type="SUPFAM" id="SSF52200">
    <property type="entry name" value="Toll/Interleukin receptor TIR domain"/>
    <property type="match status" value="1"/>
</dbReference>
<dbReference type="PROSITE" id="PS50835">
    <property type="entry name" value="IG_LIKE"/>
    <property type="match status" value="3"/>
</dbReference>
<dbReference type="PROSITE" id="PS50104">
    <property type="entry name" value="TIR"/>
    <property type="match status" value="1"/>
</dbReference>
<gene>
    <name type="primary">Il1rapl1</name>
</gene>
<evidence type="ECO:0000250" key="1"/>
<evidence type="ECO:0000250" key="2">
    <source>
        <dbReference type="UniProtKB" id="P59823"/>
    </source>
</evidence>
<evidence type="ECO:0000250" key="3">
    <source>
        <dbReference type="UniProtKB" id="Q9NZN1"/>
    </source>
</evidence>
<evidence type="ECO:0000255" key="4"/>
<evidence type="ECO:0000255" key="5">
    <source>
        <dbReference type="PROSITE-ProRule" id="PRU00114"/>
    </source>
</evidence>
<evidence type="ECO:0000255" key="6">
    <source>
        <dbReference type="PROSITE-ProRule" id="PRU00204"/>
    </source>
</evidence>
<evidence type="ECO:0000256" key="7">
    <source>
        <dbReference type="SAM" id="MobiDB-lite"/>
    </source>
</evidence>
<evidence type="ECO:0000269" key="8">
    <source>
    </source>
</evidence>
<evidence type="ECO:0000269" key="9">
    <source>
    </source>
</evidence>
<evidence type="ECO:0000305" key="10"/>